<organism>
    <name type="scientific">Lawsonia intracellularis (strain PHE/MN1-00)</name>
    <dbReference type="NCBI Taxonomy" id="363253"/>
    <lineage>
        <taxon>Bacteria</taxon>
        <taxon>Pseudomonadati</taxon>
        <taxon>Thermodesulfobacteriota</taxon>
        <taxon>Desulfovibrionia</taxon>
        <taxon>Desulfovibrionales</taxon>
        <taxon>Desulfovibrionaceae</taxon>
        <taxon>Lawsonia</taxon>
    </lineage>
</organism>
<gene>
    <name evidence="1" type="primary">purM</name>
    <name type="ordered locus">LI0296</name>
</gene>
<protein>
    <recommendedName>
        <fullName evidence="1">Phosphoribosylformylglycinamidine cyclo-ligase</fullName>
        <ecNumber evidence="1">6.3.3.1</ecNumber>
    </recommendedName>
    <alternativeName>
        <fullName evidence="1">AIR synthase</fullName>
    </alternativeName>
    <alternativeName>
        <fullName evidence="1">AIRS</fullName>
    </alternativeName>
    <alternativeName>
        <fullName evidence="1">Phosphoribosyl-aminoimidazole synthetase</fullName>
    </alternativeName>
</protein>
<feature type="chain" id="PRO_0000258366" description="Phosphoribosylformylglycinamidine cyclo-ligase">
    <location>
        <begin position="1"/>
        <end position="349"/>
    </location>
</feature>
<sequence length="349" mass="37864">MSLIRSQAYTNAGVNINAGNALISNIKSFVSETNIQGVLSDLGGFGGLFKLNLTQVDNPVLVSSTDGVGTKLKFAFDFNKHDTVGIDLVAMCVNDILVQGARPLFFLDYFATSKLDVDKATQVIYGISEGCKQARCALLGGETAELPGMYTEGEYDLAGFCVGIVDQSKIIDGSSIKVGDTIIGLASSGIHSNGYSLVRQIINQCAIEPDNIIPGSRDTFKQVLLKPTFIYSDIICNLIKDISIKGMVHITGGGFYDNIPRVLPQSVVANIQFSSWDIPPIFYWLQEQGSLSWSEMLQVFNCGIGYVLIIPNDSVTRAMNILKSMEVSAWIIGSIEKQNVGDEQVIITY</sequence>
<proteinExistence type="inferred from homology"/>
<name>PUR5_LAWIP</name>
<comment type="catalytic activity">
    <reaction evidence="1">
        <text>2-formamido-N(1)-(5-O-phospho-beta-D-ribosyl)acetamidine + ATP = 5-amino-1-(5-phospho-beta-D-ribosyl)imidazole + ADP + phosphate + H(+)</text>
        <dbReference type="Rhea" id="RHEA:23032"/>
        <dbReference type="ChEBI" id="CHEBI:15378"/>
        <dbReference type="ChEBI" id="CHEBI:30616"/>
        <dbReference type="ChEBI" id="CHEBI:43474"/>
        <dbReference type="ChEBI" id="CHEBI:137981"/>
        <dbReference type="ChEBI" id="CHEBI:147287"/>
        <dbReference type="ChEBI" id="CHEBI:456216"/>
        <dbReference type="EC" id="6.3.3.1"/>
    </reaction>
</comment>
<comment type="pathway">
    <text evidence="1">Purine metabolism; IMP biosynthesis via de novo pathway; 5-amino-1-(5-phospho-D-ribosyl)imidazole from N(2)-formyl-N(1)-(5-phospho-D-ribosyl)glycinamide: step 2/2.</text>
</comment>
<comment type="subcellular location">
    <subcellularLocation>
        <location evidence="1">Cytoplasm</location>
    </subcellularLocation>
</comment>
<comment type="similarity">
    <text evidence="1">Belongs to the AIR synthase family.</text>
</comment>
<keyword id="KW-0067">ATP-binding</keyword>
<keyword id="KW-0963">Cytoplasm</keyword>
<keyword id="KW-0436">Ligase</keyword>
<keyword id="KW-0547">Nucleotide-binding</keyword>
<keyword id="KW-0658">Purine biosynthesis</keyword>
<keyword id="KW-1185">Reference proteome</keyword>
<evidence type="ECO:0000255" key="1">
    <source>
        <dbReference type="HAMAP-Rule" id="MF_00741"/>
    </source>
</evidence>
<accession>Q1MRM4</accession>
<dbReference type="EC" id="6.3.3.1" evidence="1"/>
<dbReference type="EMBL" id="AM180252">
    <property type="protein sequence ID" value="CAJ54352.1"/>
    <property type="molecule type" value="Genomic_DNA"/>
</dbReference>
<dbReference type="RefSeq" id="WP_011526381.1">
    <property type="nucleotide sequence ID" value="NC_008011.1"/>
</dbReference>
<dbReference type="SMR" id="Q1MRM4"/>
<dbReference type="STRING" id="363253.LI0296"/>
<dbReference type="KEGG" id="lip:LI0296"/>
<dbReference type="eggNOG" id="COG0150">
    <property type="taxonomic scope" value="Bacteria"/>
</dbReference>
<dbReference type="HOGENOM" id="CLU_047116_0_0_7"/>
<dbReference type="OrthoDB" id="9777881at2"/>
<dbReference type="UniPathway" id="UPA00074">
    <property type="reaction ID" value="UER00129"/>
</dbReference>
<dbReference type="Proteomes" id="UP000002430">
    <property type="component" value="Chromosome"/>
</dbReference>
<dbReference type="GO" id="GO:0005829">
    <property type="term" value="C:cytosol"/>
    <property type="evidence" value="ECO:0007669"/>
    <property type="project" value="TreeGrafter"/>
</dbReference>
<dbReference type="GO" id="GO:0005524">
    <property type="term" value="F:ATP binding"/>
    <property type="evidence" value="ECO:0007669"/>
    <property type="project" value="UniProtKB-KW"/>
</dbReference>
<dbReference type="GO" id="GO:0004637">
    <property type="term" value="F:phosphoribosylamine-glycine ligase activity"/>
    <property type="evidence" value="ECO:0007669"/>
    <property type="project" value="TreeGrafter"/>
</dbReference>
<dbReference type="GO" id="GO:0004641">
    <property type="term" value="F:phosphoribosylformylglycinamidine cyclo-ligase activity"/>
    <property type="evidence" value="ECO:0007669"/>
    <property type="project" value="UniProtKB-UniRule"/>
</dbReference>
<dbReference type="GO" id="GO:0006189">
    <property type="term" value="P:'de novo' IMP biosynthetic process"/>
    <property type="evidence" value="ECO:0007669"/>
    <property type="project" value="UniProtKB-UniRule"/>
</dbReference>
<dbReference type="GO" id="GO:0046084">
    <property type="term" value="P:adenine biosynthetic process"/>
    <property type="evidence" value="ECO:0007669"/>
    <property type="project" value="TreeGrafter"/>
</dbReference>
<dbReference type="CDD" id="cd02196">
    <property type="entry name" value="PurM"/>
    <property type="match status" value="1"/>
</dbReference>
<dbReference type="FunFam" id="3.30.1330.10:FF:000001">
    <property type="entry name" value="Phosphoribosylformylglycinamidine cyclo-ligase"/>
    <property type="match status" value="1"/>
</dbReference>
<dbReference type="FunFam" id="3.90.650.10:FF:000011">
    <property type="entry name" value="Phosphoribosylformylglycinamidine cyclo-ligase"/>
    <property type="match status" value="1"/>
</dbReference>
<dbReference type="Gene3D" id="3.90.650.10">
    <property type="entry name" value="PurM-like C-terminal domain"/>
    <property type="match status" value="1"/>
</dbReference>
<dbReference type="Gene3D" id="3.30.1330.10">
    <property type="entry name" value="PurM-like, N-terminal domain"/>
    <property type="match status" value="1"/>
</dbReference>
<dbReference type="HAMAP" id="MF_00741">
    <property type="entry name" value="AIRS"/>
    <property type="match status" value="1"/>
</dbReference>
<dbReference type="InterPro" id="IPR010918">
    <property type="entry name" value="PurM-like_C_dom"/>
</dbReference>
<dbReference type="InterPro" id="IPR036676">
    <property type="entry name" value="PurM-like_C_sf"/>
</dbReference>
<dbReference type="InterPro" id="IPR016188">
    <property type="entry name" value="PurM-like_N"/>
</dbReference>
<dbReference type="InterPro" id="IPR036921">
    <property type="entry name" value="PurM-like_N_sf"/>
</dbReference>
<dbReference type="InterPro" id="IPR004733">
    <property type="entry name" value="PurM_cligase"/>
</dbReference>
<dbReference type="NCBIfam" id="TIGR00878">
    <property type="entry name" value="purM"/>
    <property type="match status" value="1"/>
</dbReference>
<dbReference type="PANTHER" id="PTHR10520:SF12">
    <property type="entry name" value="TRIFUNCTIONAL PURINE BIOSYNTHETIC PROTEIN ADENOSINE-3"/>
    <property type="match status" value="1"/>
</dbReference>
<dbReference type="PANTHER" id="PTHR10520">
    <property type="entry name" value="TRIFUNCTIONAL PURINE BIOSYNTHETIC PROTEIN ADENOSINE-3-RELATED"/>
    <property type="match status" value="1"/>
</dbReference>
<dbReference type="Pfam" id="PF00586">
    <property type="entry name" value="AIRS"/>
    <property type="match status" value="1"/>
</dbReference>
<dbReference type="Pfam" id="PF02769">
    <property type="entry name" value="AIRS_C"/>
    <property type="match status" value="1"/>
</dbReference>
<dbReference type="SUPFAM" id="SSF56042">
    <property type="entry name" value="PurM C-terminal domain-like"/>
    <property type="match status" value="1"/>
</dbReference>
<dbReference type="SUPFAM" id="SSF55326">
    <property type="entry name" value="PurM N-terminal domain-like"/>
    <property type="match status" value="1"/>
</dbReference>
<reference key="1">
    <citation type="submission" date="2005-11" db="EMBL/GenBank/DDBJ databases">
        <title>The complete genome sequence of Lawsonia intracellularis: the causative agent of proliferative enteropathy.</title>
        <authorList>
            <person name="Kaur K."/>
            <person name="Zhang Q."/>
            <person name="Beckler D."/>
            <person name="Munir S."/>
            <person name="Li L."/>
            <person name="Kinsley K."/>
            <person name="Herron L."/>
            <person name="Peterson A."/>
            <person name="May B."/>
            <person name="Singh S."/>
            <person name="Gebhart C."/>
            <person name="Kapur V."/>
        </authorList>
    </citation>
    <scope>NUCLEOTIDE SEQUENCE [LARGE SCALE GENOMIC DNA]</scope>
    <source>
        <strain>PHE/MN1-00</strain>
    </source>
</reference>